<gene>
    <name type="primary">BABAM2</name>
    <name type="synonym">BRE</name>
    <name type="ORF">BRAFLDRAFT_269508</name>
</gene>
<dbReference type="EMBL" id="ABEP02001063">
    <property type="status" value="NOT_ANNOTATED_CDS"/>
    <property type="molecule type" value="Genomic_DNA"/>
</dbReference>
<dbReference type="SMR" id="B6NXD5"/>
<dbReference type="FunCoup" id="B6NXD5">
    <property type="interactions" value="254"/>
</dbReference>
<dbReference type="STRING" id="7739.B6NXD5"/>
<dbReference type="InParanoid" id="B6NXD5"/>
<dbReference type="OMA" id="AGSTWRH"/>
<dbReference type="OrthoDB" id="538811at2759"/>
<dbReference type="Proteomes" id="UP000001554">
    <property type="component" value="Unplaced"/>
</dbReference>
<dbReference type="GO" id="GO:0070531">
    <property type="term" value="C:BRCA1-A complex"/>
    <property type="evidence" value="ECO:0000250"/>
    <property type="project" value="UniProtKB"/>
</dbReference>
<dbReference type="GO" id="GO:0070552">
    <property type="term" value="C:BRISC complex"/>
    <property type="evidence" value="ECO:0000250"/>
    <property type="project" value="UniProtKB"/>
</dbReference>
<dbReference type="GO" id="GO:0005737">
    <property type="term" value="C:cytoplasm"/>
    <property type="evidence" value="ECO:0000250"/>
    <property type="project" value="UniProtKB"/>
</dbReference>
<dbReference type="GO" id="GO:0005634">
    <property type="term" value="C:nucleus"/>
    <property type="evidence" value="ECO:0000250"/>
    <property type="project" value="UniProtKB"/>
</dbReference>
<dbReference type="GO" id="GO:0031593">
    <property type="term" value="F:polyubiquitin modification-dependent protein binding"/>
    <property type="evidence" value="ECO:0000250"/>
    <property type="project" value="UniProtKB"/>
</dbReference>
<dbReference type="GO" id="GO:0006915">
    <property type="term" value="P:apoptotic process"/>
    <property type="evidence" value="ECO:0007669"/>
    <property type="project" value="UniProtKB-KW"/>
</dbReference>
<dbReference type="GO" id="GO:0051301">
    <property type="term" value="P:cell division"/>
    <property type="evidence" value="ECO:0007669"/>
    <property type="project" value="UniProtKB-KW"/>
</dbReference>
<dbReference type="GO" id="GO:0006325">
    <property type="term" value="P:chromatin organization"/>
    <property type="evidence" value="ECO:0007669"/>
    <property type="project" value="UniProtKB-KW"/>
</dbReference>
<dbReference type="GO" id="GO:0006302">
    <property type="term" value="P:double-strand break repair"/>
    <property type="evidence" value="ECO:0000250"/>
    <property type="project" value="UniProtKB"/>
</dbReference>
<dbReference type="GO" id="GO:0007095">
    <property type="term" value="P:mitotic G2 DNA damage checkpoint signaling"/>
    <property type="evidence" value="ECO:0000250"/>
    <property type="project" value="UniProtKB"/>
</dbReference>
<dbReference type="GO" id="GO:0045739">
    <property type="term" value="P:positive regulation of DNA repair"/>
    <property type="evidence" value="ECO:0000250"/>
    <property type="project" value="UniProtKB"/>
</dbReference>
<dbReference type="GO" id="GO:0010212">
    <property type="term" value="P:response to ionizing radiation"/>
    <property type="evidence" value="ECO:0000250"/>
    <property type="project" value="UniProtKB"/>
</dbReference>
<dbReference type="CDD" id="cd23664">
    <property type="entry name" value="BRE"/>
    <property type="match status" value="1"/>
</dbReference>
<dbReference type="InterPro" id="IPR010358">
    <property type="entry name" value="BRE"/>
</dbReference>
<dbReference type="PANTHER" id="PTHR15189">
    <property type="entry name" value="BRISC AND BRCA1-A COMPLEX MEMBER 2"/>
    <property type="match status" value="1"/>
</dbReference>
<dbReference type="PANTHER" id="PTHR15189:SF7">
    <property type="entry name" value="BRISC AND BRCA1-A COMPLEX MEMBER 2"/>
    <property type="match status" value="1"/>
</dbReference>
<dbReference type="Pfam" id="PF06113">
    <property type="entry name" value="BRE"/>
    <property type="match status" value="1"/>
</dbReference>
<organism>
    <name type="scientific">Branchiostoma floridae</name>
    <name type="common">Florida lancelet</name>
    <name type="synonym">Amphioxus</name>
    <dbReference type="NCBI Taxonomy" id="7739"/>
    <lineage>
        <taxon>Eukaryota</taxon>
        <taxon>Metazoa</taxon>
        <taxon>Chordata</taxon>
        <taxon>Cephalochordata</taxon>
        <taxon>Leptocardii</taxon>
        <taxon>Amphioxiformes</taxon>
        <taxon>Branchiostomatidae</taxon>
        <taxon>Branchiostoma</taxon>
    </lineage>
</organism>
<comment type="function">
    <text evidence="1">Component of the BRCA1-A complex, a complex that specifically recognizes 'Lys-63'-linked ubiquitinated histones H2A and H2AX at DNA lesions sites, leading to target the BRCA1-BARD1 heterodimer to sites of DNA damage at double-strand breaks (DSBs). The BRCA1-A complex also possesses deubiquitinase activity that specifically removes 'Lys-63'-linked ubiquitin on histones H2A and H2AX. In the BRCA1-A complex, it acts as an adapter that bridges the interaction between BABAM1/NBA1 and the rest of the complex, thereby being required for the complex integrity and modulating the E3 ubiquitin ligase activity of the BRCA1-BARD1 heterodimer. Component of the BRISC complex, a multiprotein complex that specifically cleaves 'Lys-63'-linked ubiquitin in various substrates. Within the BRISC complex, acts as an adapter that bridges the interaction between BABAM1/NBA1 and the rest of the complex, thereby being required for the complex integrity. The BRISC complex is required for normal mitotic spindle assembly and microtubule attachment to kinetochores via its role in deubiquitinating NUMA1. The BRISC complex plays a role in interferon signaling via its role in the deubiquitination of the interferon receptor IFNAR1; deubiquitination increases IFNAR1 activity by enhancing its stability and cell surface expression. Down-regulates the response to bacterial lipopolysaccharide (LPS) via its role in IFNAR1 deubiquitination. May play a role in homeostasis or cellular differentiation in cells of neural, epithelial and germline origins. May also act as a death receptor-associated anti-apoptotic protein, which inhibits the mitochondrial apoptotic pathway. May regulate TNF-alpha signaling through its interactions with TNFRSF1A; however these effects may be indirect.</text>
</comment>
<comment type="subunit">
    <text evidence="1">Component of the ARISC complex, at least composed of UIMC1/RAP80, ABRAXAS1, BRCC3/BRCC36, BABAM2 and BABAM1/NBA1. Component of the BRCA1-A complex, at least composed of BRCA1, BARD1, UIMC1/RAP80, ABRAXAS1, BRCC3/BRCC36, BABAM2 and BABAM1/NBA1. In the BRCA1-A complex, interacts directly with ABRAXAS1, BRCC3/BRCC36 and BABAM1/NBA1. Binds polyubiquitin. Component of the BRISC complex, at least composed of ABRAXAS2, BRCC3/BRCC36, BABAM2 and BABAM1/NBA1.</text>
</comment>
<comment type="subcellular location">
    <subcellularLocation>
        <location evidence="1">Cytoplasm</location>
    </subcellularLocation>
    <subcellularLocation>
        <location evidence="1">Nucleus</location>
    </subcellularLocation>
    <text evidence="1">Localizes at sites of DNA damage at double-strand breaks (DSBs).</text>
</comment>
<comment type="domain">
    <text evidence="1">Contains 2 ubiquitin-conjugating enzyme family-like (UEV-like) regions. These regions lack the critical Cys residues required for ubiquitination but retain the ability to bind ubiquitin.</text>
</comment>
<comment type="similarity">
    <text evidence="2">Belongs to the BABAM2 family.</text>
</comment>
<keyword id="KW-0053">Apoptosis</keyword>
<keyword id="KW-0131">Cell cycle</keyword>
<keyword id="KW-0132">Cell division</keyword>
<keyword id="KW-0156">Chromatin regulator</keyword>
<keyword id="KW-0963">Cytoplasm</keyword>
<keyword id="KW-0227">DNA damage</keyword>
<keyword id="KW-0234">DNA repair</keyword>
<keyword id="KW-0498">Mitosis</keyword>
<keyword id="KW-0539">Nucleus</keyword>
<keyword id="KW-1185">Reference proteome</keyword>
<keyword id="KW-0677">Repeat</keyword>
<keyword id="KW-0833">Ubl conjugation pathway</keyword>
<name>BABA2_BRAFL</name>
<reference key="1">
    <citation type="journal article" date="2008" name="Nature">
        <title>The amphioxus genome and the evolution of the chordate karyotype.</title>
        <authorList>
            <person name="Putnam N.H."/>
            <person name="Butts T."/>
            <person name="Ferrier D.E.K."/>
            <person name="Furlong R.F."/>
            <person name="Hellsten U."/>
            <person name="Kawashima T."/>
            <person name="Robinson-Rechavi M."/>
            <person name="Shoguchi E."/>
            <person name="Terry A."/>
            <person name="Yu J.-K."/>
            <person name="Benito-Gutierrez E.L."/>
            <person name="Dubchak I."/>
            <person name="Garcia-Fernandez J."/>
            <person name="Gibson-Brown J.J."/>
            <person name="Grigoriev I.V."/>
            <person name="Horton A.C."/>
            <person name="de Jong P.J."/>
            <person name="Jurka J."/>
            <person name="Kapitonov V.V."/>
            <person name="Kohara Y."/>
            <person name="Kuroki Y."/>
            <person name="Lindquist E."/>
            <person name="Lucas S."/>
            <person name="Osoegawa K."/>
            <person name="Pennacchio L.A."/>
            <person name="Salamov A.A."/>
            <person name="Satou Y."/>
            <person name="Sauka-Spengler T."/>
            <person name="Schmutz J."/>
            <person name="Shin-I T."/>
            <person name="Toyoda A."/>
            <person name="Bronner-Fraser M."/>
            <person name="Fujiyama A."/>
            <person name="Holland L.Z."/>
            <person name="Holland P.W.H."/>
            <person name="Satoh N."/>
            <person name="Rokhsar D.S."/>
        </authorList>
    </citation>
    <scope>NUCLEOTIDE SEQUENCE [LARGE SCALE GENOMIC DNA]</scope>
    <source>
        <strain>S238N-H82</strain>
        <tissue>Testis</tissue>
    </source>
</reference>
<proteinExistence type="inferred from homology"/>
<evidence type="ECO:0000250" key="1">
    <source>
        <dbReference type="UniProtKB" id="Q9NXR7"/>
    </source>
</evidence>
<evidence type="ECO:0000255" key="2"/>
<feature type="chain" id="PRO_0000373939" description="BRISC and BRCA1-A complex member 2">
    <location>
        <begin position="1"/>
        <end position="383"/>
    </location>
</feature>
<feature type="region of interest" description="UEV-like 1">
    <location>
        <begin position="31"/>
        <end position="150"/>
    </location>
</feature>
<feature type="region of interest" description="UEV-like 2">
    <location>
        <begin position="274"/>
        <end position="364"/>
    </location>
</feature>
<protein>
    <recommendedName>
        <fullName>BRISC and BRCA1-A complex member 2</fullName>
    </recommendedName>
    <alternativeName>
        <fullName>BRCA1-A complex subunit BRE</fullName>
    </alternativeName>
    <alternativeName>
        <fullName>BRCA1/BRCA2-containing complex subunit 45</fullName>
    </alternativeName>
    <alternativeName>
        <fullName>Brain and reproductive organ-expressed protein</fullName>
    </alternativeName>
</protein>
<sequence length="383" mass="43818">MSSGQSVLKQLHPLIRPYAETVLRKGNVGVCMGNLRISDVKSGRPTLTQTKEPCGDRFKIYIPFAGDSLKWEVIFDSCQPSNPPDFIFLGENGNFDPDIEKLENLTHWDPKNPESLVLAIEDLMREYRCYQKQLIEGYSRLQFEYSSLQGMEACDDVEVHMGNRLPGTLDSPVNFLIRLPIDLSPIPQYLVKDDPGEDLAVLLAKFHNSEGSRVTPQLFLSPKVEHALGDNTALRIPRFPTGGCLMDYVPQVQDFLQKQIDHIVEGYQRRREYVAAFISRFGGSVLEYDAESFTKLSLVLEWNEFFFVLHIELPSRFPQDMPVFTFQSCYHLSKTNGEPYVSVQKSYPYSPRWTGEEMAHRAKLFILDFIPQFKKVSVSSNKL</sequence>
<accession>B6NXD5</accession>